<feature type="chain" id="PRO_1000128192" description="Small ribosomal subunit protein uS9">
    <location>
        <begin position="1"/>
        <end position="129"/>
    </location>
</feature>
<gene>
    <name evidence="1" type="primary">rpsI</name>
    <name type="ordered locus">TPASS_1024</name>
</gene>
<dbReference type="EMBL" id="CP000805">
    <property type="protein sequence ID" value="ACD71440.1"/>
    <property type="molecule type" value="Genomic_DNA"/>
</dbReference>
<dbReference type="RefSeq" id="WP_010882468.1">
    <property type="nucleotide sequence ID" value="NC_021508.1"/>
</dbReference>
<dbReference type="SMR" id="B2S4R1"/>
<dbReference type="GeneID" id="93876771"/>
<dbReference type="KEGG" id="tpp:TPASS_1024"/>
<dbReference type="PATRIC" id="fig|455434.6.peg.1013"/>
<dbReference type="Proteomes" id="UP000001202">
    <property type="component" value="Chromosome"/>
</dbReference>
<dbReference type="GO" id="GO:0005737">
    <property type="term" value="C:cytoplasm"/>
    <property type="evidence" value="ECO:0007669"/>
    <property type="project" value="UniProtKB-ARBA"/>
</dbReference>
<dbReference type="GO" id="GO:0015935">
    <property type="term" value="C:small ribosomal subunit"/>
    <property type="evidence" value="ECO:0007669"/>
    <property type="project" value="TreeGrafter"/>
</dbReference>
<dbReference type="GO" id="GO:0003723">
    <property type="term" value="F:RNA binding"/>
    <property type="evidence" value="ECO:0007669"/>
    <property type="project" value="TreeGrafter"/>
</dbReference>
<dbReference type="GO" id="GO:0003735">
    <property type="term" value="F:structural constituent of ribosome"/>
    <property type="evidence" value="ECO:0007669"/>
    <property type="project" value="InterPro"/>
</dbReference>
<dbReference type="GO" id="GO:0006412">
    <property type="term" value="P:translation"/>
    <property type="evidence" value="ECO:0007669"/>
    <property type="project" value="UniProtKB-UniRule"/>
</dbReference>
<dbReference type="FunFam" id="3.30.230.10:FF:000001">
    <property type="entry name" value="30S ribosomal protein S9"/>
    <property type="match status" value="1"/>
</dbReference>
<dbReference type="Gene3D" id="3.30.230.10">
    <property type="match status" value="1"/>
</dbReference>
<dbReference type="HAMAP" id="MF_00532_B">
    <property type="entry name" value="Ribosomal_uS9_B"/>
    <property type="match status" value="1"/>
</dbReference>
<dbReference type="InterPro" id="IPR020568">
    <property type="entry name" value="Ribosomal_Su5_D2-typ_SF"/>
</dbReference>
<dbReference type="InterPro" id="IPR000754">
    <property type="entry name" value="Ribosomal_uS9"/>
</dbReference>
<dbReference type="InterPro" id="IPR023035">
    <property type="entry name" value="Ribosomal_uS9_bac/plastid"/>
</dbReference>
<dbReference type="InterPro" id="IPR020574">
    <property type="entry name" value="Ribosomal_uS9_CS"/>
</dbReference>
<dbReference type="InterPro" id="IPR014721">
    <property type="entry name" value="Ribsml_uS5_D2-typ_fold_subgr"/>
</dbReference>
<dbReference type="NCBIfam" id="NF001099">
    <property type="entry name" value="PRK00132.1"/>
    <property type="match status" value="1"/>
</dbReference>
<dbReference type="PANTHER" id="PTHR21569">
    <property type="entry name" value="RIBOSOMAL PROTEIN S9"/>
    <property type="match status" value="1"/>
</dbReference>
<dbReference type="PANTHER" id="PTHR21569:SF1">
    <property type="entry name" value="SMALL RIBOSOMAL SUBUNIT PROTEIN US9M"/>
    <property type="match status" value="1"/>
</dbReference>
<dbReference type="Pfam" id="PF00380">
    <property type="entry name" value="Ribosomal_S9"/>
    <property type="match status" value="1"/>
</dbReference>
<dbReference type="SUPFAM" id="SSF54211">
    <property type="entry name" value="Ribosomal protein S5 domain 2-like"/>
    <property type="match status" value="1"/>
</dbReference>
<dbReference type="PROSITE" id="PS00360">
    <property type="entry name" value="RIBOSOMAL_S9"/>
    <property type="match status" value="1"/>
</dbReference>
<organism>
    <name type="scientific">Treponema pallidum subsp. pallidum (strain SS14)</name>
    <dbReference type="NCBI Taxonomy" id="455434"/>
    <lineage>
        <taxon>Bacteria</taxon>
        <taxon>Pseudomonadati</taxon>
        <taxon>Spirochaetota</taxon>
        <taxon>Spirochaetia</taxon>
        <taxon>Spirochaetales</taxon>
        <taxon>Treponemataceae</taxon>
        <taxon>Treponema</taxon>
    </lineage>
</organism>
<comment type="similarity">
    <text evidence="1">Belongs to the universal ribosomal protein uS9 family.</text>
</comment>
<reference key="1">
    <citation type="journal article" date="2008" name="BMC Microbiol.">
        <title>Complete genome sequence of Treponema pallidum ssp. pallidum strain SS14 determined with oligonucleotide arrays.</title>
        <authorList>
            <person name="Matejkova P."/>
            <person name="Strouhal M."/>
            <person name="Smajs D."/>
            <person name="Norris S.J."/>
            <person name="Palzkill T."/>
            <person name="Petrosino J.F."/>
            <person name="Sodergren E."/>
            <person name="Norton J.E."/>
            <person name="Singh J."/>
            <person name="Richmond T.A."/>
            <person name="Molla M.N."/>
            <person name="Albert T.J."/>
            <person name="Weinstock G.M."/>
        </authorList>
    </citation>
    <scope>NUCLEOTIDE SEQUENCE [LARGE SCALE GENOMIC DNA]</scope>
    <source>
        <strain>SS14</strain>
    </source>
</reference>
<sequence>MKNLGIGTGRRKTAVARVCIRMGNGNVTVNRRDVGAYFPTAEQLRRVREPLFATANERRYDVIVNVYGGGLDGQAGACAHGIARALVRADASNQASLRAGGLLTRDSRMVERKKYGQRGARRRFQFSKR</sequence>
<keyword id="KW-0687">Ribonucleoprotein</keyword>
<keyword id="KW-0689">Ribosomal protein</keyword>
<proteinExistence type="inferred from homology"/>
<name>RS9_TREPS</name>
<accession>B2S4R1</accession>
<protein>
    <recommendedName>
        <fullName evidence="1">Small ribosomal subunit protein uS9</fullName>
    </recommendedName>
    <alternativeName>
        <fullName evidence="2">30S ribosomal protein S9</fullName>
    </alternativeName>
</protein>
<evidence type="ECO:0000255" key="1">
    <source>
        <dbReference type="HAMAP-Rule" id="MF_00532"/>
    </source>
</evidence>
<evidence type="ECO:0000305" key="2"/>